<evidence type="ECO:0000250" key="1"/>
<evidence type="ECO:0000250" key="2">
    <source>
        <dbReference type="UniProtKB" id="P01127"/>
    </source>
</evidence>
<evidence type="ECO:0000250" key="3">
    <source>
        <dbReference type="UniProtKB" id="P31240"/>
    </source>
</evidence>
<evidence type="ECO:0000255" key="4"/>
<evidence type="ECO:0000256" key="5">
    <source>
        <dbReference type="SAM" id="MobiDB-lite"/>
    </source>
</evidence>
<evidence type="ECO:0000305" key="6"/>
<dbReference type="EMBL" id="AY553983">
    <property type="protein sequence ID" value="AAS60200.1"/>
    <property type="molecule type" value="mRNA"/>
</dbReference>
<dbReference type="RefSeq" id="NP_001003383.1">
    <property type="nucleotide sequence ID" value="NM_001003383.1"/>
</dbReference>
<dbReference type="RefSeq" id="XP_005625739.1">
    <property type="nucleotide sequence ID" value="XM_005625682.2"/>
</dbReference>
<dbReference type="SMR" id="Q6Q7I7"/>
<dbReference type="FunCoup" id="Q6Q7I7">
    <property type="interactions" value="291"/>
</dbReference>
<dbReference type="STRING" id="9615.ENSCAFP00000056148"/>
<dbReference type="GlyCosmos" id="Q6Q7I7">
    <property type="glycosylation" value="1 site, No reported glycans"/>
</dbReference>
<dbReference type="PaxDb" id="9612-ENSCAFP00000001945"/>
<dbReference type="Ensembl" id="ENSCAFT00000002101.5">
    <property type="protein sequence ID" value="ENSCAFP00000001945.4"/>
    <property type="gene ID" value="ENSCAFG00000001356.5"/>
</dbReference>
<dbReference type="GeneID" id="442986"/>
<dbReference type="KEGG" id="cfa:442986"/>
<dbReference type="CTD" id="5155"/>
<dbReference type="VGNC" id="VGNC:44369">
    <property type="gene designation" value="PDGFB"/>
</dbReference>
<dbReference type="eggNOG" id="ENOG502S2VW">
    <property type="taxonomic scope" value="Eukaryota"/>
</dbReference>
<dbReference type="InParanoid" id="Q6Q7I7"/>
<dbReference type="OrthoDB" id="8878063at2759"/>
<dbReference type="Reactome" id="R-CFA-114608">
    <property type="pathway name" value="Platelet degranulation"/>
</dbReference>
<dbReference type="Reactome" id="R-CFA-1257604">
    <property type="pathway name" value="PIP3 activates AKT signaling"/>
</dbReference>
<dbReference type="Reactome" id="R-CFA-186763">
    <property type="pathway name" value="Downstream signal transduction"/>
</dbReference>
<dbReference type="Reactome" id="R-CFA-186797">
    <property type="pathway name" value="Signaling by PDGF"/>
</dbReference>
<dbReference type="Reactome" id="R-CFA-5673001">
    <property type="pathway name" value="RAF/MAP kinase cascade"/>
</dbReference>
<dbReference type="Reactome" id="R-CFA-6811558">
    <property type="pathway name" value="PI5P, PP2A and IER3 Regulate PI3K/AKT Signaling"/>
</dbReference>
<dbReference type="Proteomes" id="UP000002254">
    <property type="component" value="Chromosome 10"/>
</dbReference>
<dbReference type="Proteomes" id="UP000694429">
    <property type="component" value="Unplaced"/>
</dbReference>
<dbReference type="Proteomes" id="UP000694542">
    <property type="component" value="Unplaced"/>
</dbReference>
<dbReference type="Proteomes" id="UP000805418">
    <property type="component" value="Unplaced"/>
</dbReference>
<dbReference type="GO" id="GO:0016323">
    <property type="term" value="C:basolateral plasma membrane"/>
    <property type="evidence" value="ECO:0000250"/>
    <property type="project" value="UniProtKB"/>
</dbReference>
<dbReference type="GO" id="GO:0009986">
    <property type="term" value="C:cell surface"/>
    <property type="evidence" value="ECO:0000250"/>
    <property type="project" value="UniProtKB"/>
</dbReference>
<dbReference type="GO" id="GO:0005737">
    <property type="term" value="C:cytoplasm"/>
    <property type="evidence" value="ECO:0000250"/>
    <property type="project" value="UniProtKB"/>
</dbReference>
<dbReference type="GO" id="GO:0005576">
    <property type="term" value="C:extracellular region"/>
    <property type="evidence" value="ECO:0007669"/>
    <property type="project" value="UniProtKB-SubCell"/>
</dbReference>
<dbReference type="GO" id="GO:0008083">
    <property type="term" value="F:growth factor activity"/>
    <property type="evidence" value="ECO:0000250"/>
    <property type="project" value="UniProtKB"/>
</dbReference>
<dbReference type="GO" id="GO:0005161">
    <property type="term" value="F:platelet-derived growth factor receptor binding"/>
    <property type="evidence" value="ECO:0000250"/>
    <property type="project" value="UniProtKB"/>
</dbReference>
<dbReference type="GO" id="GO:0042803">
    <property type="term" value="F:protein homodimerization activity"/>
    <property type="evidence" value="ECO:0000250"/>
    <property type="project" value="UniProtKB"/>
</dbReference>
<dbReference type="GO" id="GO:0016176">
    <property type="term" value="F:superoxide-generating NADPH oxidase activator activity"/>
    <property type="evidence" value="ECO:0000250"/>
    <property type="project" value="UniProtKB"/>
</dbReference>
<dbReference type="GO" id="GO:0060326">
    <property type="term" value="P:cell chemotaxis"/>
    <property type="evidence" value="ECO:0000250"/>
    <property type="project" value="UniProtKB"/>
</dbReference>
<dbReference type="GO" id="GO:0071506">
    <property type="term" value="P:cellular response to mycophenolic acid"/>
    <property type="evidence" value="ECO:0000250"/>
    <property type="project" value="UniProtKB"/>
</dbReference>
<dbReference type="GO" id="GO:0001892">
    <property type="term" value="P:embryonic placenta development"/>
    <property type="evidence" value="ECO:0000250"/>
    <property type="project" value="UniProtKB"/>
</dbReference>
<dbReference type="GO" id="GO:0007507">
    <property type="term" value="P:heart development"/>
    <property type="evidence" value="ECO:0000250"/>
    <property type="project" value="UniProtKB"/>
</dbReference>
<dbReference type="GO" id="GO:0072255">
    <property type="term" value="P:metanephric glomerular mesangial cell development"/>
    <property type="evidence" value="ECO:0000250"/>
    <property type="project" value="UniProtKB"/>
</dbReference>
<dbReference type="GO" id="GO:0002548">
    <property type="term" value="P:monocyte chemotaxis"/>
    <property type="evidence" value="ECO:0000250"/>
    <property type="project" value="UniProtKB"/>
</dbReference>
<dbReference type="GO" id="GO:0010629">
    <property type="term" value="P:negative regulation of gene expression"/>
    <property type="evidence" value="ECO:0000250"/>
    <property type="project" value="UniProtKB"/>
</dbReference>
<dbReference type="GO" id="GO:0010512">
    <property type="term" value="P:negative regulation of phosphatidylinositol biosynthetic process"/>
    <property type="evidence" value="ECO:0000250"/>
    <property type="project" value="UniProtKB"/>
</dbReference>
<dbReference type="GO" id="GO:0010544">
    <property type="term" value="P:negative regulation of platelet activation"/>
    <property type="evidence" value="ECO:0000250"/>
    <property type="project" value="UniProtKB"/>
</dbReference>
<dbReference type="GO" id="GO:0038001">
    <property type="term" value="P:paracrine signaling"/>
    <property type="evidence" value="ECO:0000250"/>
    <property type="project" value="UniProtKB"/>
</dbReference>
<dbReference type="GO" id="GO:0018108">
    <property type="term" value="P:peptidyl-tyrosine phosphorylation"/>
    <property type="evidence" value="ECO:0000250"/>
    <property type="project" value="UniProtKB"/>
</dbReference>
<dbReference type="GO" id="GO:0048008">
    <property type="term" value="P:platelet-derived growth factor receptor signaling pathway"/>
    <property type="evidence" value="ECO:0000250"/>
    <property type="project" value="UniProtKB"/>
</dbReference>
<dbReference type="GO" id="GO:0043536">
    <property type="term" value="P:positive regulation of blood vessel endothelial cell migration"/>
    <property type="evidence" value="ECO:0000250"/>
    <property type="project" value="UniProtKB"/>
</dbReference>
<dbReference type="GO" id="GO:0090280">
    <property type="term" value="P:positive regulation of calcium ion import"/>
    <property type="evidence" value="ECO:0000250"/>
    <property type="project" value="UniProtKB"/>
</dbReference>
<dbReference type="GO" id="GO:0051781">
    <property type="term" value="P:positive regulation of cell division"/>
    <property type="evidence" value="ECO:0007669"/>
    <property type="project" value="UniProtKB-KW"/>
</dbReference>
<dbReference type="GO" id="GO:0008284">
    <property type="term" value="P:positive regulation of cell population proliferation"/>
    <property type="evidence" value="ECO:0000250"/>
    <property type="project" value="UniProtKB"/>
</dbReference>
<dbReference type="GO" id="GO:0050921">
    <property type="term" value="P:positive regulation of chemotaxis"/>
    <property type="evidence" value="ECO:0000250"/>
    <property type="project" value="UniProtKB"/>
</dbReference>
<dbReference type="GO" id="GO:2000573">
    <property type="term" value="P:positive regulation of DNA biosynthetic process"/>
    <property type="evidence" value="ECO:0000250"/>
    <property type="project" value="UniProtKB"/>
</dbReference>
<dbReference type="GO" id="GO:0045893">
    <property type="term" value="P:positive regulation of DNA-templated transcription"/>
    <property type="evidence" value="ECO:0000250"/>
    <property type="project" value="UniProtKB"/>
</dbReference>
<dbReference type="GO" id="GO:0001938">
    <property type="term" value="P:positive regulation of endothelial cell proliferation"/>
    <property type="evidence" value="ECO:0000250"/>
    <property type="project" value="UniProtKB"/>
</dbReference>
<dbReference type="GO" id="GO:0070374">
    <property type="term" value="P:positive regulation of ERK1 and ERK2 cascade"/>
    <property type="evidence" value="ECO:0000250"/>
    <property type="project" value="UniProtKB"/>
</dbReference>
<dbReference type="GO" id="GO:0048146">
    <property type="term" value="P:positive regulation of fibroblast proliferation"/>
    <property type="evidence" value="ECO:0000250"/>
    <property type="project" value="UniProtKB"/>
</dbReference>
<dbReference type="GO" id="GO:0003104">
    <property type="term" value="P:positive regulation of glomerular filtration"/>
    <property type="evidence" value="ECO:0000250"/>
    <property type="project" value="UniProtKB"/>
</dbReference>
<dbReference type="GO" id="GO:0072126">
    <property type="term" value="P:positive regulation of glomerular mesangial cell proliferation"/>
    <property type="evidence" value="ECO:0000250"/>
    <property type="project" value="UniProtKB"/>
</dbReference>
<dbReference type="GO" id="GO:1900127">
    <property type="term" value="P:positive regulation of hyaluronan biosynthetic process"/>
    <property type="evidence" value="ECO:0000250"/>
    <property type="project" value="UniProtKB"/>
</dbReference>
<dbReference type="GO" id="GO:0043406">
    <property type="term" value="P:positive regulation of MAP kinase activity"/>
    <property type="evidence" value="ECO:0000250"/>
    <property type="project" value="UniProtKB"/>
</dbReference>
<dbReference type="GO" id="GO:0043410">
    <property type="term" value="P:positive regulation of MAPK cascade"/>
    <property type="evidence" value="ECO:0000250"/>
    <property type="project" value="UniProtKB"/>
</dbReference>
<dbReference type="GO" id="GO:2000591">
    <property type="term" value="P:positive regulation of metanephric mesenchymal cell migration"/>
    <property type="evidence" value="ECO:0000250"/>
    <property type="project" value="UniProtKB"/>
</dbReference>
<dbReference type="GO" id="GO:0035793">
    <property type="term" value="P:positive regulation of metanephric mesenchymal cell migration by platelet-derived growth factor receptor-beta signaling pathway"/>
    <property type="evidence" value="ECO:0000250"/>
    <property type="project" value="UniProtKB"/>
</dbReference>
<dbReference type="GO" id="GO:0045840">
    <property type="term" value="P:positive regulation of mitotic nuclear division"/>
    <property type="evidence" value="ECO:0000250"/>
    <property type="project" value="UniProtKB"/>
</dbReference>
<dbReference type="GO" id="GO:0051897">
    <property type="term" value="P:positive regulation of phosphatidylinositol 3-kinase/protein kinase B signal transduction"/>
    <property type="evidence" value="ECO:0000250"/>
    <property type="project" value="UniProtKB"/>
</dbReference>
<dbReference type="GO" id="GO:0031954">
    <property type="term" value="P:positive regulation of protein autophosphorylation"/>
    <property type="evidence" value="ECO:0000250"/>
    <property type="project" value="UniProtKB"/>
</dbReference>
<dbReference type="GO" id="GO:2000379">
    <property type="term" value="P:positive regulation of reactive oxygen species metabolic process"/>
    <property type="evidence" value="ECO:0000250"/>
    <property type="project" value="UniProtKB"/>
</dbReference>
<dbReference type="GO" id="GO:0014911">
    <property type="term" value="P:positive regulation of smooth muscle cell migration"/>
    <property type="evidence" value="ECO:0000250"/>
    <property type="project" value="UniProtKB"/>
</dbReference>
<dbReference type="GO" id="GO:0048661">
    <property type="term" value="P:positive regulation of smooth muscle cell proliferation"/>
    <property type="evidence" value="ECO:0000250"/>
    <property type="project" value="UniProtKB"/>
</dbReference>
<dbReference type="GO" id="GO:1904707">
    <property type="term" value="P:positive regulation of vascular associated smooth muscle cell proliferation"/>
    <property type="evidence" value="ECO:0000250"/>
    <property type="project" value="UniProtKB"/>
</dbReference>
<dbReference type="GO" id="GO:0006468">
    <property type="term" value="P:protein phosphorylation"/>
    <property type="evidence" value="ECO:0000250"/>
    <property type="project" value="UniProtKB"/>
</dbReference>
<dbReference type="GO" id="GO:0072593">
    <property type="term" value="P:reactive oxygen species metabolic process"/>
    <property type="evidence" value="ECO:0000250"/>
    <property type="project" value="UniProtKB"/>
</dbReference>
<dbReference type="GO" id="GO:0009611">
    <property type="term" value="P:response to wounding"/>
    <property type="evidence" value="ECO:0000250"/>
    <property type="project" value="UniProtKB"/>
</dbReference>
<dbReference type="CDD" id="cd00135">
    <property type="entry name" value="PDGF"/>
    <property type="match status" value="1"/>
</dbReference>
<dbReference type="FunFam" id="2.10.90.10:FF:000023">
    <property type="entry name" value="Platelet-derived growth factor subunit B"/>
    <property type="match status" value="1"/>
</dbReference>
<dbReference type="Gene3D" id="2.10.90.10">
    <property type="entry name" value="Cystine-knot cytokines"/>
    <property type="match status" value="1"/>
</dbReference>
<dbReference type="InterPro" id="IPR029034">
    <property type="entry name" value="Cystine-knot_cytokine"/>
</dbReference>
<dbReference type="InterPro" id="IPR023581">
    <property type="entry name" value="PD_growth_factor_CS"/>
</dbReference>
<dbReference type="InterPro" id="IPR000072">
    <property type="entry name" value="PDGF/VEGF_dom"/>
</dbReference>
<dbReference type="InterPro" id="IPR006782">
    <property type="entry name" value="PDGF_N"/>
</dbReference>
<dbReference type="PANTHER" id="PTHR11633">
    <property type="entry name" value="PLATELET-DERIVED GROWTH FACTOR"/>
    <property type="match status" value="1"/>
</dbReference>
<dbReference type="PANTHER" id="PTHR11633:SF2">
    <property type="entry name" value="PLATELET-DERIVED GROWTH FACTOR SUBUNIT B"/>
    <property type="match status" value="1"/>
</dbReference>
<dbReference type="Pfam" id="PF00341">
    <property type="entry name" value="PDGF"/>
    <property type="match status" value="1"/>
</dbReference>
<dbReference type="Pfam" id="PF04692">
    <property type="entry name" value="PDGF_N"/>
    <property type="match status" value="1"/>
</dbReference>
<dbReference type="SMART" id="SM00141">
    <property type="entry name" value="PDGF"/>
    <property type="match status" value="1"/>
</dbReference>
<dbReference type="SUPFAM" id="SSF57501">
    <property type="entry name" value="Cystine-knot cytokines"/>
    <property type="match status" value="1"/>
</dbReference>
<dbReference type="PROSITE" id="PS00249">
    <property type="entry name" value="PDGF_1"/>
    <property type="match status" value="1"/>
</dbReference>
<dbReference type="PROSITE" id="PS50278">
    <property type="entry name" value="PDGF_2"/>
    <property type="match status" value="1"/>
</dbReference>
<keyword id="KW-0165">Cleavage on pair of basic residues</keyword>
<keyword id="KW-0217">Developmental protein</keyword>
<keyword id="KW-1015">Disulfide bond</keyword>
<keyword id="KW-0325">Glycoprotein</keyword>
<keyword id="KW-0339">Growth factor</keyword>
<keyword id="KW-0497">Mitogen</keyword>
<keyword id="KW-0656">Proto-oncogene</keyword>
<keyword id="KW-1185">Reference proteome</keyword>
<keyword id="KW-0964">Secreted</keyword>
<keyword id="KW-0732">Signal</keyword>
<reference key="1">
    <citation type="submission" date="2004-02" db="EMBL/GenBank/DDBJ databases">
        <title>Cloning and sequencing of the canine PDGF-B gene.</title>
        <authorList>
            <person name="Cartwright J.M."/>
        </authorList>
    </citation>
    <scope>NUCLEOTIDE SEQUENCE [MRNA]</scope>
</reference>
<name>PDGFB_CANLF</name>
<comment type="function">
    <text evidence="2 3">Growth factor that plays an essential role in the regulation of embryonic development, cell proliferation, cell migration, survival and chemotaxis. Potent mitogen for cells of mesenchymal origin. Required for normal proliferation and recruitment of pericytes and vascular smooth muscle cells in the central nervous system, skin, lung, heart and placenta. Required for normal blood vessel development, and for normal development of kidney glomeruli. Plays an important role in wound healing. Signaling is modulated by the formation of heterodimers with PDGFA (By similarity).</text>
</comment>
<comment type="subunit">
    <text evidence="1 2">Antiparallel homodimer; disulfide-linked. Antiparallel heterodimer with PDGFA; disulfide-linked. The PDGFB homodimer interacts with PDGFRA and PDGFRB homodimers, and with heterodimers formed by PDGFRA and PDGFRB. The heterodimer composed of PDGFA and PDGFB interacts with PDGFRB homodimers, and with heterodimers formed by PDGFRA and PDGFRB. Interacts with XLKD1 (By similarity). Interacts with LRP1. Interacts with SORL1 (via the N-terminal ectodomain). Interacts with CD82; this interaction inhibits PDGFB-mediated signaling pathway (By similarity).</text>
</comment>
<comment type="subcellular location">
    <subcellularLocation>
        <location evidence="1">Secreted</location>
    </subcellularLocation>
    <text evidence="1">Released by platelets upon wounding.</text>
</comment>
<comment type="similarity">
    <text evidence="6">Belongs to the PDGF/VEGF growth factor family.</text>
</comment>
<sequence>MNRCWALFLSLCCYLRLVSAEGDPIPEELYEMLSDHSIRSFDDLQRLLHGASVDEDGAELDLNLTRSHSGDELESLSRGRRSLGSPTVAEPAMIAECKTRTEVFEISRRLIDRTNANFLVWPPCVEVQRCSGCCNNRNVQCRPTQVQLRPVQVRKIEIVRKKPTFKKATVTLEDHLACKCETVVAARPVTRTPGSSQDLRAAKTPQTRVTIRTVRVRRPPKGKHRKFKHTHDKKALKETLGA</sequence>
<feature type="signal peptide" evidence="4">
    <location>
        <begin position="1"/>
        <end position="20"/>
    </location>
</feature>
<feature type="propeptide" id="PRO_0000023366" description="Removed in mature form" evidence="1">
    <location>
        <begin position="21"/>
        <end position="81"/>
    </location>
</feature>
<feature type="chain" id="PRO_0000023367" description="Platelet-derived growth factor subunit B">
    <location>
        <begin position="82"/>
        <end position="242"/>
    </location>
</feature>
<feature type="region of interest" description="Disordered" evidence="5">
    <location>
        <begin position="219"/>
        <end position="242"/>
    </location>
</feature>
<feature type="compositionally biased region" description="Basic residues" evidence="5">
    <location>
        <begin position="219"/>
        <end position="232"/>
    </location>
</feature>
<feature type="compositionally biased region" description="Basic and acidic residues" evidence="5">
    <location>
        <begin position="233"/>
        <end position="242"/>
    </location>
</feature>
<feature type="glycosylation site" description="N-linked (GlcNAc...) asparagine" evidence="4">
    <location>
        <position position="63"/>
    </location>
</feature>
<feature type="disulfide bond" evidence="1">
    <location>
        <begin position="97"/>
        <end position="141"/>
    </location>
</feature>
<feature type="disulfide bond" description="Interchain" evidence="1">
    <location>
        <position position="124"/>
    </location>
</feature>
<feature type="disulfide bond" evidence="1">
    <location>
        <begin position="130"/>
        <end position="178"/>
    </location>
</feature>
<feature type="disulfide bond" description="Interchain" evidence="1">
    <location>
        <position position="133"/>
    </location>
</feature>
<feature type="disulfide bond" evidence="1">
    <location>
        <begin position="134"/>
        <end position="180"/>
    </location>
</feature>
<accession>Q6Q7I7</accession>
<gene>
    <name type="primary">PDGFB</name>
</gene>
<protein>
    <recommendedName>
        <fullName>Platelet-derived growth factor subunit B</fullName>
        <shortName>PDGF subunit B</shortName>
    </recommendedName>
    <alternativeName>
        <fullName>PDGF-2</fullName>
    </alternativeName>
    <alternativeName>
        <fullName>Platelet-derived growth factor B chain</fullName>
    </alternativeName>
    <alternativeName>
        <fullName>Platelet-derived growth factor beta polypeptide</fullName>
    </alternativeName>
</protein>
<proteinExistence type="evidence at transcript level"/>
<organism>
    <name type="scientific">Canis lupus familiaris</name>
    <name type="common">Dog</name>
    <name type="synonym">Canis familiaris</name>
    <dbReference type="NCBI Taxonomy" id="9615"/>
    <lineage>
        <taxon>Eukaryota</taxon>
        <taxon>Metazoa</taxon>
        <taxon>Chordata</taxon>
        <taxon>Craniata</taxon>
        <taxon>Vertebrata</taxon>
        <taxon>Euteleostomi</taxon>
        <taxon>Mammalia</taxon>
        <taxon>Eutheria</taxon>
        <taxon>Laurasiatheria</taxon>
        <taxon>Carnivora</taxon>
        <taxon>Caniformia</taxon>
        <taxon>Canidae</taxon>
        <taxon>Canis</taxon>
    </lineage>
</organism>